<keyword id="KW-0007">Acetylation</keyword>
<keyword id="KW-0025">Alternative splicing</keyword>
<keyword id="KW-0963">Cytoplasm</keyword>
<keyword id="KW-0206">Cytoskeleton</keyword>
<keyword id="KW-0342">GTP-binding</keyword>
<keyword id="KW-0378">Hydrolase</keyword>
<keyword id="KW-0493">Microtubule</keyword>
<keyword id="KW-0505">Motor protein</keyword>
<keyword id="KW-0547">Nucleotide-binding</keyword>
<keyword id="KW-1185">Reference proteome</keyword>
<protein>
    <recommendedName>
        <fullName evidence="9">Phragmoplastin DRP1D</fullName>
        <ecNumber evidence="2">3.6.5.-</ecNumber>
    </recommendedName>
    <alternativeName>
        <fullName evidence="6">Dynamin-like protein 1D</fullName>
    </alternativeName>
    <alternativeName>
        <fullName evidence="7">Dynamin-like protein DLP3</fullName>
    </alternativeName>
    <alternativeName>
        <fullName evidence="7">Dynamin-related protein 1D</fullName>
        <shortName evidence="7">AtDRP1D</shortName>
    </alternativeName>
</protein>
<comment type="function">
    <text evidence="1 2">Putative microtubule-associated force-producing protein. Has a GTPase activity (By similarity).</text>
</comment>
<comment type="catalytic activity">
    <reaction evidence="2">
        <text>GTP + H2O = GDP + phosphate + H(+)</text>
        <dbReference type="Rhea" id="RHEA:19669"/>
        <dbReference type="ChEBI" id="CHEBI:15377"/>
        <dbReference type="ChEBI" id="CHEBI:15378"/>
        <dbReference type="ChEBI" id="CHEBI:37565"/>
        <dbReference type="ChEBI" id="CHEBI:43474"/>
        <dbReference type="ChEBI" id="CHEBI:58189"/>
    </reaction>
</comment>
<comment type="subunit">
    <text evidence="2 5">Forms homodimer and may homooligomerize and heterooligomerize to form the phragmoplastin complex (By similarity). Binds to PHIP1 (PubMed:18621982).</text>
</comment>
<comment type="subcellular location">
    <subcellularLocation>
        <location evidence="1">Cytoplasm</location>
    </subcellularLocation>
    <subcellularLocation>
        <location evidence="1">Cytoplasm</location>
        <location evidence="1">Cytoskeleton</location>
    </subcellularLocation>
    <text evidence="1">Microtubule-associated.</text>
</comment>
<comment type="alternative products">
    <event type="alternative splicing"/>
    <isoform>
        <id>Q8S3C9-1</id>
        <name>1</name>
        <name>DLP3a</name>
        <sequence type="displayed"/>
    </isoform>
    <isoform>
        <id>Q8S3C9-2</id>
        <name>2</name>
        <name>DLP3b</name>
        <sequence type="described" ref="VSP_012753"/>
    </isoform>
    <isoform>
        <id>Q8S3C9-3</id>
        <name>3</name>
        <sequence type="described" ref="VSP_012753 VSP_012754"/>
    </isoform>
</comment>
<comment type="miscellaneous">
    <molecule>Isoform 2</molecule>
    <text evidence="9">May be due to a competing acceptor splice site.</text>
</comment>
<comment type="miscellaneous">
    <molecule>Isoform 3</molecule>
    <text evidence="9">May be due to competing acceptor splice sites.</text>
</comment>
<comment type="similarity">
    <text evidence="4">Belongs to the TRAFAC class dynamin-like GTPase superfamily. Dynamin/Fzo/YdjA family.</text>
</comment>
<organism>
    <name type="scientific">Arabidopsis thaliana</name>
    <name type="common">Mouse-ear cress</name>
    <dbReference type="NCBI Taxonomy" id="3702"/>
    <lineage>
        <taxon>Eukaryota</taxon>
        <taxon>Viridiplantae</taxon>
        <taxon>Streptophyta</taxon>
        <taxon>Embryophyta</taxon>
        <taxon>Tracheophyta</taxon>
        <taxon>Spermatophyta</taxon>
        <taxon>Magnoliopsida</taxon>
        <taxon>eudicotyledons</taxon>
        <taxon>Gunneridae</taxon>
        <taxon>Pentapetalae</taxon>
        <taxon>rosids</taxon>
        <taxon>malvids</taxon>
        <taxon>Brassicales</taxon>
        <taxon>Brassicaceae</taxon>
        <taxon>Camelineae</taxon>
        <taxon>Arabidopsis</taxon>
    </lineage>
</organism>
<accession>Q8S3C9</accession>
<accession>O80499</accession>
<accession>Q9FNX3</accession>
<accession>Q9FNX4</accession>
<evidence type="ECO:0000250" key="1"/>
<evidence type="ECO:0000250" key="2">
    <source>
        <dbReference type="UniProtKB" id="P42697"/>
    </source>
</evidence>
<evidence type="ECO:0000255" key="3">
    <source>
        <dbReference type="PROSITE-ProRule" id="PRU00720"/>
    </source>
</evidence>
<evidence type="ECO:0000255" key="4">
    <source>
        <dbReference type="PROSITE-ProRule" id="PRU01055"/>
    </source>
</evidence>
<evidence type="ECO:0000269" key="5">
    <source>
    </source>
</evidence>
<evidence type="ECO:0000303" key="6">
    <source>
    </source>
</evidence>
<evidence type="ECO:0000303" key="7">
    <source>
    </source>
</evidence>
<evidence type="ECO:0000303" key="8">
    <source ref="2"/>
</evidence>
<evidence type="ECO:0000305" key="9"/>
<evidence type="ECO:0000312" key="10">
    <source>
        <dbReference type="Araport" id="AT2G44590"/>
    </source>
</evidence>
<evidence type="ECO:0000312" key="11">
    <source>
        <dbReference type="EMBL" id="AAC27461.1"/>
    </source>
</evidence>
<sequence>MESLIVLINTIQRACTVVGDHGGDSNALSSLWEALPSVAVVGGQSSGKSSVLESIVGRDFLPRGSGIVTRRPLVLQLHKTENGTEDNAEFLHLTNKKFTNFSLVRKEIEDETDRITGKNKQISSIPIHLSIFSPNVVNLTLIDLPGLTKVAVEGQPETIVEDIESMVRSYVEKPNCLILAISPANQDIATSDAMKLAKEVDPIGDRTFGVLTKLDLMDKGTNALDVINGRSYKLKYPWVGIVNRSQADINKNVDMMVARRKEREYFETSPDYGHLATRMGSEYLAKLLSKLLESVIRSRIPSILSLINNNIEELERELDQLGRPIAIDAGAQLYTILGMCRAFEKIFKEHLDGGRPGGARIYGIFDYNLPTAIKKLPFDRHLSLQSVKRIVSESDGYQPHLIAPELGYRRLIEGSLNHFRGPAEASVNAIHLILKELVRKAIAETEELKRFPSLQIELVAAANSSLDKFREESMKSVLRLVDMESSYLTVDFFRKLHVESQNMSLSSPTSAIDQYGDGHFRKIASNVAAYIKMVAETLVNTIPKAVVHCQVRQAKLSLLNYFYAQISQSQGKRLGQLLDENPALMERRMQCAKRLELYKKARDEIDAAVWVR</sequence>
<feature type="chain" id="PRO_0000206580" description="Phragmoplastin DRP1D">
    <location>
        <begin position="1"/>
        <end position="612"/>
    </location>
</feature>
<feature type="domain" description="Dynamin-type G" evidence="4">
    <location>
        <begin position="32"/>
        <end position="301"/>
    </location>
</feature>
<feature type="domain" description="GED" evidence="3">
    <location>
        <begin position="520"/>
        <end position="612"/>
    </location>
</feature>
<feature type="region of interest" description="G1 motif" evidence="4">
    <location>
        <begin position="42"/>
        <end position="49"/>
    </location>
</feature>
<feature type="region of interest" description="G2 motif" evidence="4">
    <location>
        <begin position="68"/>
        <end position="70"/>
    </location>
</feature>
<feature type="region of interest" description="G3 motif" evidence="4">
    <location>
        <begin position="143"/>
        <end position="146"/>
    </location>
</feature>
<feature type="region of interest" description="G4 motif" evidence="4">
    <location>
        <begin position="212"/>
        <end position="215"/>
    </location>
</feature>
<feature type="region of interest" description="G5 motif" evidence="4">
    <location>
        <begin position="242"/>
        <end position="245"/>
    </location>
</feature>
<feature type="binding site" evidence="2">
    <location>
        <begin position="45"/>
        <end position="50"/>
    </location>
    <ligand>
        <name>GTP</name>
        <dbReference type="ChEBI" id="CHEBI:37565"/>
    </ligand>
</feature>
<feature type="binding site" evidence="2">
    <location>
        <begin position="213"/>
        <end position="218"/>
    </location>
    <ligand>
        <name>GTP</name>
        <dbReference type="ChEBI" id="CHEBI:37565"/>
    </ligand>
</feature>
<feature type="binding site" evidence="2">
    <location>
        <begin position="243"/>
        <end position="246"/>
    </location>
    <ligand>
        <name>GTP</name>
        <dbReference type="ChEBI" id="CHEBI:37565"/>
    </ligand>
</feature>
<feature type="modified residue" description="N-acetylmethionine" evidence="2">
    <location>
        <position position="1"/>
    </location>
</feature>
<feature type="splice variant" id="VSP_012753" description="In isoform 2 and isoform 3." evidence="6 8">
    <location>
        <begin position="136"/>
        <end position="152"/>
    </location>
</feature>
<feature type="splice variant" id="VSP_012754" description="In isoform 3." evidence="6">
    <original>Q</original>
    <variation>QQ</variation>
    <location>
        <position position="570"/>
    </location>
</feature>
<reference key="1">
    <citation type="journal article" date="2001" name="Plant Physiol.">
        <title>The Arabidopsis cell plate-associated dynamin-like protein, ADL1Ap, is required for multiple stages of plant growth and development.</title>
        <authorList>
            <person name="Kang B.-H."/>
            <person name="Busse J.S."/>
            <person name="Dickey C."/>
            <person name="Rancour D.M."/>
            <person name="Bednarek S.Y."/>
        </authorList>
    </citation>
    <scope>NUCLEOTIDE SEQUENCE [MRNA] (ISOFORM 3)</scope>
    <source>
        <strain>cv. Columbia</strain>
    </source>
</reference>
<reference key="2">
    <citation type="submission" date="2000-12" db="EMBL/GenBank/DDBJ databases">
        <title>Identification of a subgroup of closely related dynamin-like proteins in Arabidopsis thaliana.</title>
        <authorList>
            <person name="Jasper F."/>
            <person name="Menzel D."/>
        </authorList>
    </citation>
    <scope>NUCLEOTIDE SEQUENCE [MRNA] (ISOFORMS 1 AND 2)</scope>
    <source>
        <strain>cv. Columbia</strain>
    </source>
</reference>
<reference key="3">
    <citation type="journal article" date="1999" name="Nature">
        <title>Sequence and analysis of chromosome 2 of the plant Arabidopsis thaliana.</title>
        <authorList>
            <person name="Lin X."/>
            <person name="Kaul S."/>
            <person name="Rounsley S.D."/>
            <person name="Shea T.P."/>
            <person name="Benito M.-I."/>
            <person name="Town C.D."/>
            <person name="Fujii C.Y."/>
            <person name="Mason T.M."/>
            <person name="Bowman C.L."/>
            <person name="Barnstead M.E."/>
            <person name="Feldblyum T.V."/>
            <person name="Buell C.R."/>
            <person name="Ketchum K.A."/>
            <person name="Lee J.J."/>
            <person name="Ronning C.M."/>
            <person name="Koo H.L."/>
            <person name="Moffat K.S."/>
            <person name="Cronin L.A."/>
            <person name="Shen M."/>
            <person name="Pai G."/>
            <person name="Van Aken S."/>
            <person name="Umayam L."/>
            <person name="Tallon L.J."/>
            <person name="Gill J.E."/>
            <person name="Adams M.D."/>
            <person name="Carrera A.J."/>
            <person name="Creasy T.H."/>
            <person name="Goodman H.M."/>
            <person name="Somerville C.R."/>
            <person name="Copenhaver G.P."/>
            <person name="Preuss D."/>
            <person name="Nierman W.C."/>
            <person name="White O."/>
            <person name="Eisen J.A."/>
            <person name="Salzberg S.L."/>
            <person name="Fraser C.M."/>
            <person name="Venter J.C."/>
        </authorList>
    </citation>
    <scope>NUCLEOTIDE SEQUENCE [LARGE SCALE GENOMIC DNA]</scope>
    <source>
        <strain>cv. Columbia</strain>
    </source>
</reference>
<reference key="4">
    <citation type="journal article" date="2017" name="Plant J.">
        <title>Araport11: a complete reannotation of the Arabidopsis thaliana reference genome.</title>
        <authorList>
            <person name="Cheng C.Y."/>
            <person name="Krishnakumar V."/>
            <person name="Chan A.P."/>
            <person name="Thibaud-Nissen F."/>
            <person name="Schobel S."/>
            <person name="Town C.D."/>
        </authorList>
    </citation>
    <scope>GENOME REANNOTATION</scope>
    <source>
        <strain>cv. Columbia</strain>
    </source>
</reference>
<reference key="5">
    <citation type="journal article" date="2003" name="Plant Mol. Biol.">
        <title>A unified nomenclature for Arabidopsis dynamin-related large GTPases based on homology and possible functions.</title>
        <authorList>
            <person name="Hong Z."/>
            <person name="Bednarek S.Y."/>
            <person name="Blumwald E."/>
            <person name="Hwang I."/>
            <person name="Jurgens G."/>
            <person name="Menzel D."/>
            <person name="Osteryoung K.W."/>
            <person name="Raikhel N.V."/>
            <person name="Shinozaki K."/>
            <person name="Tsutsumi N."/>
            <person name="Verma D.P.S."/>
        </authorList>
    </citation>
    <scope>GENE FAMILY</scope>
    <scope>NOMENCLATURE</scope>
</reference>
<reference key="6">
    <citation type="journal article" date="2008" name="Plant Physiol.">
        <title>A novel RNA-binding protein associated with cell plate formation.</title>
        <authorList>
            <person name="Ma L."/>
            <person name="Xie B."/>
            <person name="Hong Z."/>
            <person name="Verma D.P.S."/>
            <person name="Zhang Z."/>
        </authorList>
    </citation>
    <scope>INTERACTION WITH PHIP1</scope>
</reference>
<gene>
    <name evidence="7" type="primary">DRP1D</name>
    <name evidence="6 7" type="synonym">ADL1D</name>
    <name evidence="7" type="synonym">DLP3</name>
    <name evidence="10" type="ordered locus">At2g44590</name>
    <name evidence="11" type="ORF">F16B22.8</name>
</gene>
<dbReference type="EC" id="3.6.5.-" evidence="2"/>
<dbReference type="EMBL" id="AF488807">
    <property type="protein sequence ID" value="AAL92169.1"/>
    <property type="molecule type" value="mRNA"/>
</dbReference>
<dbReference type="EMBL" id="AJ304843">
    <property type="protein sequence ID" value="CAC19658.1"/>
    <property type="molecule type" value="mRNA"/>
</dbReference>
<dbReference type="EMBL" id="AJ304844">
    <property type="protein sequence ID" value="CAC19659.1"/>
    <property type="molecule type" value="mRNA"/>
</dbReference>
<dbReference type="EMBL" id="AC003672">
    <property type="protein sequence ID" value="AAC27461.1"/>
    <property type="molecule type" value="Genomic_DNA"/>
</dbReference>
<dbReference type="EMBL" id="CP002685">
    <property type="protein sequence ID" value="AEC10443.1"/>
    <property type="molecule type" value="Genomic_DNA"/>
</dbReference>
<dbReference type="EMBL" id="CP002685">
    <property type="protein sequence ID" value="AEC10444.1"/>
    <property type="molecule type" value="Genomic_DNA"/>
</dbReference>
<dbReference type="EMBL" id="CP002685">
    <property type="protein sequence ID" value="AEC10445.1"/>
    <property type="molecule type" value="Genomic_DNA"/>
</dbReference>
<dbReference type="PIR" id="T01586">
    <property type="entry name" value="T01586"/>
</dbReference>
<dbReference type="RefSeq" id="NP_850418.1">
    <molecule id="Q8S3C9-3"/>
    <property type="nucleotide sequence ID" value="NM_180087.1"/>
</dbReference>
<dbReference type="RefSeq" id="NP_850419.1">
    <molecule id="Q8S3C9-2"/>
    <property type="nucleotide sequence ID" value="NM_180088.3"/>
</dbReference>
<dbReference type="RefSeq" id="NP_850420.1">
    <molecule id="Q8S3C9-1"/>
    <property type="nucleotide sequence ID" value="NM_180089.2"/>
</dbReference>
<dbReference type="SMR" id="Q8S3C9"/>
<dbReference type="STRING" id="3702.Q8S3C9"/>
<dbReference type="iPTMnet" id="Q8S3C9"/>
<dbReference type="PaxDb" id="3702-AT2G44590.3"/>
<dbReference type="ProteomicsDB" id="224362">
    <molecule id="Q8S3C9-1"/>
</dbReference>
<dbReference type="EnsemblPlants" id="AT2G44590.1">
    <molecule id="Q8S3C9-3"/>
    <property type="protein sequence ID" value="AT2G44590.1"/>
    <property type="gene ID" value="AT2G44590"/>
</dbReference>
<dbReference type="EnsemblPlants" id="AT2G44590.2">
    <molecule id="Q8S3C9-2"/>
    <property type="protein sequence ID" value="AT2G44590.2"/>
    <property type="gene ID" value="AT2G44590"/>
</dbReference>
<dbReference type="EnsemblPlants" id="AT2G44590.3">
    <molecule id="Q8S3C9-1"/>
    <property type="protein sequence ID" value="AT2G44590.3"/>
    <property type="gene ID" value="AT2G44590"/>
</dbReference>
<dbReference type="GeneID" id="819067"/>
<dbReference type="Gramene" id="AT2G44590.1">
    <molecule id="Q8S3C9-3"/>
    <property type="protein sequence ID" value="AT2G44590.1"/>
    <property type="gene ID" value="AT2G44590"/>
</dbReference>
<dbReference type="Gramene" id="AT2G44590.2">
    <molecule id="Q8S3C9-2"/>
    <property type="protein sequence ID" value="AT2G44590.2"/>
    <property type="gene ID" value="AT2G44590"/>
</dbReference>
<dbReference type="Gramene" id="AT2G44590.3">
    <molecule id="Q8S3C9-1"/>
    <property type="protein sequence ID" value="AT2G44590.3"/>
    <property type="gene ID" value="AT2G44590"/>
</dbReference>
<dbReference type="KEGG" id="ath:AT2G44590"/>
<dbReference type="Araport" id="AT2G44590"/>
<dbReference type="TAIR" id="AT2G44590">
    <property type="gene designation" value="DL1D"/>
</dbReference>
<dbReference type="eggNOG" id="KOG0446">
    <property type="taxonomic scope" value="Eukaryota"/>
</dbReference>
<dbReference type="HOGENOM" id="CLU_008964_5_3_1"/>
<dbReference type="InParanoid" id="Q8S3C9"/>
<dbReference type="OMA" id="FRKLHVM"/>
<dbReference type="PhylomeDB" id="Q8S3C9"/>
<dbReference type="PRO" id="PR:Q8S3C9"/>
<dbReference type="Proteomes" id="UP000006548">
    <property type="component" value="Chromosome 2"/>
</dbReference>
<dbReference type="ExpressionAtlas" id="Q8S3C9">
    <property type="expression patterns" value="baseline and differential"/>
</dbReference>
<dbReference type="GO" id="GO:0005737">
    <property type="term" value="C:cytoplasm"/>
    <property type="evidence" value="ECO:0007669"/>
    <property type="project" value="UniProtKB-SubCell"/>
</dbReference>
<dbReference type="GO" id="GO:0005874">
    <property type="term" value="C:microtubule"/>
    <property type="evidence" value="ECO:0007669"/>
    <property type="project" value="UniProtKB-KW"/>
</dbReference>
<dbReference type="GO" id="GO:0005525">
    <property type="term" value="F:GTP binding"/>
    <property type="evidence" value="ECO:0007669"/>
    <property type="project" value="UniProtKB-KW"/>
</dbReference>
<dbReference type="GO" id="GO:0003924">
    <property type="term" value="F:GTPase activity"/>
    <property type="evidence" value="ECO:0007669"/>
    <property type="project" value="InterPro"/>
</dbReference>
<dbReference type="CDD" id="cd08771">
    <property type="entry name" value="DLP_1"/>
    <property type="match status" value="1"/>
</dbReference>
<dbReference type="FunFam" id="1.20.120.1240:FF:000041">
    <property type="entry name" value="Dynamin-related protein 1D"/>
    <property type="match status" value="1"/>
</dbReference>
<dbReference type="FunFam" id="3.40.50.300:FF:000228">
    <property type="entry name" value="dynamin-related protein 1E"/>
    <property type="match status" value="1"/>
</dbReference>
<dbReference type="Gene3D" id="1.20.120.1240">
    <property type="entry name" value="Dynamin, middle domain"/>
    <property type="match status" value="1"/>
</dbReference>
<dbReference type="Gene3D" id="3.40.50.300">
    <property type="entry name" value="P-loop containing nucleotide triphosphate hydrolases"/>
    <property type="match status" value="1"/>
</dbReference>
<dbReference type="InterPro" id="IPR022812">
    <property type="entry name" value="Dynamin"/>
</dbReference>
<dbReference type="InterPro" id="IPR001401">
    <property type="entry name" value="Dynamin_GTPase"/>
</dbReference>
<dbReference type="InterPro" id="IPR019762">
    <property type="entry name" value="Dynamin_GTPase_CS"/>
</dbReference>
<dbReference type="InterPro" id="IPR045063">
    <property type="entry name" value="Dynamin_N"/>
</dbReference>
<dbReference type="InterPro" id="IPR000375">
    <property type="entry name" value="Dynamin_stalk"/>
</dbReference>
<dbReference type="InterPro" id="IPR030381">
    <property type="entry name" value="G_DYNAMIN_dom"/>
</dbReference>
<dbReference type="InterPro" id="IPR003130">
    <property type="entry name" value="GED"/>
</dbReference>
<dbReference type="InterPro" id="IPR020850">
    <property type="entry name" value="GED_dom"/>
</dbReference>
<dbReference type="InterPro" id="IPR027417">
    <property type="entry name" value="P-loop_NTPase"/>
</dbReference>
<dbReference type="PANTHER" id="PTHR11566">
    <property type="entry name" value="DYNAMIN"/>
    <property type="match status" value="1"/>
</dbReference>
<dbReference type="PANTHER" id="PTHR11566:SF152">
    <property type="entry name" value="PHRAGMOPLASTIN DRP1D"/>
    <property type="match status" value="1"/>
</dbReference>
<dbReference type="Pfam" id="PF01031">
    <property type="entry name" value="Dynamin_M"/>
    <property type="match status" value="1"/>
</dbReference>
<dbReference type="Pfam" id="PF00350">
    <property type="entry name" value="Dynamin_N"/>
    <property type="match status" value="1"/>
</dbReference>
<dbReference type="Pfam" id="PF02212">
    <property type="entry name" value="GED"/>
    <property type="match status" value="1"/>
</dbReference>
<dbReference type="PRINTS" id="PR00195">
    <property type="entry name" value="DYNAMIN"/>
</dbReference>
<dbReference type="SMART" id="SM00053">
    <property type="entry name" value="DYNc"/>
    <property type="match status" value="1"/>
</dbReference>
<dbReference type="SMART" id="SM00302">
    <property type="entry name" value="GED"/>
    <property type="match status" value="1"/>
</dbReference>
<dbReference type="SUPFAM" id="SSF52540">
    <property type="entry name" value="P-loop containing nucleoside triphosphate hydrolases"/>
    <property type="match status" value="1"/>
</dbReference>
<dbReference type="PROSITE" id="PS00410">
    <property type="entry name" value="G_DYNAMIN_1"/>
    <property type="match status" value="1"/>
</dbReference>
<dbReference type="PROSITE" id="PS51718">
    <property type="entry name" value="G_DYNAMIN_2"/>
    <property type="match status" value="1"/>
</dbReference>
<dbReference type="PROSITE" id="PS51388">
    <property type="entry name" value="GED"/>
    <property type="match status" value="1"/>
</dbReference>
<name>DRP1D_ARATH</name>
<proteinExistence type="evidence at protein level"/>